<organism>
    <name type="scientific">Saimiri sciureus</name>
    <name type="common">Common squirrel monkey</name>
    <dbReference type="NCBI Taxonomy" id="9521"/>
    <lineage>
        <taxon>Eukaryota</taxon>
        <taxon>Metazoa</taxon>
        <taxon>Chordata</taxon>
        <taxon>Craniata</taxon>
        <taxon>Vertebrata</taxon>
        <taxon>Euteleostomi</taxon>
        <taxon>Mammalia</taxon>
        <taxon>Eutheria</taxon>
        <taxon>Euarchontoglires</taxon>
        <taxon>Primates</taxon>
        <taxon>Haplorrhini</taxon>
        <taxon>Platyrrhini</taxon>
        <taxon>Cebidae</taxon>
        <taxon>Saimiriinae</taxon>
        <taxon>Saimiri</taxon>
    </lineage>
</organism>
<protein>
    <recommendedName>
        <fullName>T-cell surface glycoprotein CD8 beta chain</fullName>
    </recommendedName>
    <cdAntigenName>CD8b</cdAntigenName>
</protein>
<reference key="1">
    <citation type="journal article" date="1999" name="Immunogenetics">
        <title>Molecular characterization of cDNAs encoding squirrel monkey (Saimiri sciureus) CD8 alpha and beta chains.</title>
        <authorList>
            <person name="Ureta-Vidal A."/>
            <person name="Garcia Z."/>
            <person name="Lemonnier F.A."/>
            <person name="Kazanji M."/>
        </authorList>
    </citation>
    <scope>NUCLEOTIDE SEQUENCE [MRNA]</scope>
    <source>
        <strain>Isolate 92039</strain>
    </source>
</reference>
<comment type="function">
    <text evidence="1 2">Integral membrane glycoprotein that plays an essential role in the immune response and serves multiple functions in responses against both external and internal offenses. In T-cells, functions primarily as a coreceptor for MHC class I molecule:peptide complex. The antigens presented by class I peptides are derived from cytosolic proteins while class II derived from extracellular proteins. Interacts simultaneously with the T-cell receptor (TCR) and the MHC class I proteins presented by antigen presenting cells (APCs). In turn, recruits the Src kinase LCK to the vicinity of the TCR-CD3 complex. A palmitoylation site in the cytoplasmic tail of CD8B chain contributes to partitioning of CD8 into the plasma membrane lipid rafts where signaling proteins are enriched. Once LCK recruited, it initiates different intracellular signaling pathways by phosphorylating various substrates ultimately leading to lymphokine production, motility, adhesion and activation of cytotoxic T-lymphocytes (CTLs). Additionally, plays a critical role in thymic selection of CD8+ T-cells.</text>
</comment>
<comment type="subunit">
    <text evidence="1 2">Forms disulfide-linked heterodimers with CD8A at the cell surface. Interacts with CD3D; this interaction couples TCR-CD3 with CD8. Interacts with LCK.</text>
</comment>
<comment type="subcellular location">
    <subcellularLocation>
        <location evidence="2">Cell membrane</location>
        <topology evidence="2">Single-pass type I membrane protein</topology>
    </subcellularLocation>
    <text evidence="2">Requires the partner CD8A for efficient cell surface expression. The heterodimer CD8A/CD8B localizes to lipid rafts due to CD8B cytoplasmic tail palmitoylation.</text>
</comment>
<comment type="PTM">
    <text evidence="2">Phosphorylated as a consequence of T-cell activation.</text>
</comment>
<comment type="PTM">
    <text evidence="2">Palmitoylated at the cytoplasmic tail and thereby targets the heterodimer CD8A/CD8B to lipid rafts unlike CD8A homodimers.</text>
</comment>
<keyword id="KW-1064">Adaptive immunity</keyword>
<keyword id="KW-1003">Cell membrane</keyword>
<keyword id="KW-1015">Disulfide bond</keyword>
<keyword id="KW-0325">Glycoprotein</keyword>
<keyword id="KW-0391">Immunity</keyword>
<keyword id="KW-0393">Immunoglobulin domain</keyword>
<keyword id="KW-0449">Lipoprotein</keyword>
<keyword id="KW-0472">Membrane</keyword>
<keyword id="KW-0564">Palmitate</keyword>
<keyword id="KW-0732">Signal</keyword>
<keyword id="KW-0812">Transmembrane</keyword>
<keyword id="KW-1133">Transmembrane helix</keyword>
<sequence length="209" mass="23481">MRPRMWLLLSAQLAALHGNSVLQQTPAYIMVQTNQMVMLSCKAISSSTTRIYWLRQLHAPSSNSHHEILAFWDSSKGTIHSEGVEQKKITVFRDGSLFFLNLTRVKLEDSGTYFCMVIGSPTLIFGTGTQLSVVDILPTTAQTTKKSTPKKTVCRLPRPETRKGPLCSPITLSLLVAGILVLLVSLGVAIHLYCRQRRARLRFMKQFYK</sequence>
<evidence type="ECO:0000250" key="1">
    <source>
        <dbReference type="UniProtKB" id="P10300"/>
    </source>
</evidence>
<evidence type="ECO:0000250" key="2">
    <source>
        <dbReference type="UniProtKB" id="P10966"/>
    </source>
</evidence>
<evidence type="ECO:0000255" key="3"/>
<evidence type="ECO:0000255" key="4">
    <source>
        <dbReference type="PROSITE-ProRule" id="PRU00114"/>
    </source>
</evidence>
<feature type="signal peptide" evidence="3">
    <location>
        <begin position="1"/>
        <end position="21"/>
    </location>
</feature>
<feature type="chain" id="PRO_0000014647" description="T-cell surface glycoprotein CD8 beta chain">
    <location>
        <begin position="22"/>
        <end position="209"/>
    </location>
</feature>
<feature type="topological domain" description="Extracellular" evidence="3">
    <location>
        <begin position="22"/>
        <end position="169"/>
    </location>
</feature>
<feature type="transmembrane region" description="Helical" evidence="3">
    <location>
        <begin position="170"/>
        <end position="190"/>
    </location>
</feature>
<feature type="topological domain" description="Cytoplasmic" evidence="3">
    <location>
        <begin position="191"/>
        <end position="209"/>
    </location>
</feature>
<feature type="domain" description="Ig-like V-type">
    <location>
        <begin position="22"/>
        <end position="131"/>
    </location>
</feature>
<feature type="glycosylation site" description="N-linked (GlcNAc...) asparagine" evidence="3">
    <location>
        <position position="101"/>
    </location>
</feature>
<feature type="disulfide bond" evidence="4">
    <location>
        <begin position="41"/>
        <end position="115"/>
    </location>
</feature>
<accession>Q9XSM7</accession>
<gene>
    <name type="primary">CD8B</name>
    <name type="synonym">CD8B1</name>
</gene>
<proteinExistence type="evidence at transcript level"/>
<name>CD8B_SAISC</name>
<dbReference type="EMBL" id="AJ130819">
    <property type="protein sequence ID" value="CAB41463.1"/>
    <property type="molecule type" value="mRNA"/>
</dbReference>
<dbReference type="SMR" id="Q9XSM7"/>
<dbReference type="GlyCosmos" id="Q9XSM7">
    <property type="glycosylation" value="1 site, No reported glycans"/>
</dbReference>
<dbReference type="GO" id="GO:0009986">
    <property type="term" value="C:cell surface"/>
    <property type="evidence" value="ECO:0007669"/>
    <property type="project" value="TreeGrafter"/>
</dbReference>
<dbReference type="GO" id="GO:0005886">
    <property type="term" value="C:plasma membrane"/>
    <property type="evidence" value="ECO:0007669"/>
    <property type="project" value="UniProtKB-SubCell"/>
</dbReference>
<dbReference type="GO" id="GO:0015026">
    <property type="term" value="F:coreceptor activity"/>
    <property type="evidence" value="ECO:0007669"/>
    <property type="project" value="InterPro"/>
</dbReference>
<dbReference type="GO" id="GO:0042288">
    <property type="term" value="F:MHC class I protein binding"/>
    <property type="evidence" value="ECO:0007669"/>
    <property type="project" value="InterPro"/>
</dbReference>
<dbReference type="GO" id="GO:0002250">
    <property type="term" value="P:adaptive immune response"/>
    <property type="evidence" value="ECO:0007669"/>
    <property type="project" value="UniProtKB-KW"/>
</dbReference>
<dbReference type="GO" id="GO:0050776">
    <property type="term" value="P:regulation of immune response"/>
    <property type="evidence" value="ECO:0007669"/>
    <property type="project" value="InterPro"/>
</dbReference>
<dbReference type="CDD" id="cd07700">
    <property type="entry name" value="IgV_CD8_beta"/>
    <property type="match status" value="1"/>
</dbReference>
<dbReference type="FunFam" id="2.60.40.10:FF:000645">
    <property type="entry name" value="T-cell surface glycoprotein CD8 beta chain"/>
    <property type="match status" value="1"/>
</dbReference>
<dbReference type="Gene3D" id="2.60.40.10">
    <property type="entry name" value="Immunoglobulins"/>
    <property type="match status" value="1"/>
</dbReference>
<dbReference type="InterPro" id="IPR042414">
    <property type="entry name" value="CD8B"/>
</dbReference>
<dbReference type="InterPro" id="IPR007110">
    <property type="entry name" value="Ig-like_dom"/>
</dbReference>
<dbReference type="InterPro" id="IPR036179">
    <property type="entry name" value="Ig-like_dom_sf"/>
</dbReference>
<dbReference type="InterPro" id="IPR013783">
    <property type="entry name" value="Ig-like_fold"/>
</dbReference>
<dbReference type="InterPro" id="IPR003599">
    <property type="entry name" value="Ig_sub"/>
</dbReference>
<dbReference type="InterPro" id="IPR013106">
    <property type="entry name" value="Ig_V-set"/>
</dbReference>
<dbReference type="PANTHER" id="PTHR11292">
    <property type="entry name" value="T-CELL SURFACE GLYCOPROTEIN CD8 BETA CHAIN"/>
    <property type="match status" value="1"/>
</dbReference>
<dbReference type="PANTHER" id="PTHR11292:SF7">
    <property type="entry name" value="T-CELL SURFACE GLYCOPROTEIN CD8 BETA CHAIN-RELATED"/>
    <property type="match status" value="1"/>
</dbReference>
<dbReference type="Pfam" id="PF07686">
    <property type="entry name" value="V-set"/>
    <property type="match status" value="1"/>
</dbReference>
<dbReference type="SMART" id="SM00409">
    <property type="entry name" value="IG"/>
    <property type="match status" value="1"/>
</dbReference>
<dbReference type="SMART" id="SM00406">
    <property type="entry name" value="IGv"/>
    <property type="match status" value="1"/>
</dbReference>
<dbReference type="SUPFAM" id="SSF48726">
    <property type="entry name" value="Immunoglobulin"/>
    <property type="match status" value="1"/>
</dbReference>
<dbReference type="PROSITE" id="PS50835">
    <property type="entry name" value="IG_LIKE"/>
    <property type="match status" value="1"/>
</dbReference>